<evidence type="ECO:0000255" key="1">
    <source>
        <dbReference type="HAMAP-Rule" id="MF_00054"/>
    </source>
</evidence>
<dbReference type="EMBL" id="CP001344">
    <property type="protein sequence ID" value="ACL43096.1"/>
    <property type="molecule type" value="Genomic_DNA"/>
</dbReference>
<dbReference type="SMR" id="B8HVR8"/>
<dbReference type="STRING" id="395961.Cyan7425_0709"/>
<dbReference type="KEGG" id="cyn:Cyan7425_0709"/>
<dbReference type="eggNOG" id="COG0480">
    <property type="taxonomic scope" value="Bacteria"/>
</dbReference>
<dbReference type="HOGENOM" id="CLU_002794_4_1_3"/>
<dbReference type="OrthoDB" id="9804431at2"/>
<dbReference type="GO" id="GO:0005737">
    <property type="term" value="C:cytoplasm"/>
    <property type="evidence" value="ECO:0007669"/>
    <property type="project" value="UniProtKB-SubCell"/>
</dbReference>
<dbReference type="GO" id="GO:0005525">
    <property type="term" value="F:GTP binding"/>
    <property type="evidence" value="ECO:0007669"/>
    <property type="project" value="UniProtKB-UniRule"/>
</dbReference>
<dbReference type="GO" id="GO:0003924">
    <property type="term" value="F:GTPase activity"/>
    <property type="evidence" value="ECO:0007669"/>
    <property type="project" value="InterPro"/>
</dbReference>
<dbReference type="GO" id="GO:0003746">
    <property type="term" value="F:translation elongation factor activity"/>
    <property type="evidence" value="ECO:0007669"/>
    <property type="project" value="UniProtKB-UniRule"/>
</dbReference>
<dbReference type="GO" id="GO:0032790">
    <property type="term" value="P:ribosome disassembly"/>
    <property type="evidence" value="ECO:0007669"/>
    <property type="project" value="TreeGrafter"/>
</dbReference>
<dbReference type="CDD" id="cd01886">
    <property type="entry name" value="EF-G"/>
    <property type="match status" value="1"/>
</dbReference>
<dbReference type="CDD" id="cd16262">
    <property type="entry name" value="EFG_III"/>
    <property type="match status" value="1"/>
</dbReference>
<dbReference type="CDD" id="cd01434">
    <property type="entry name" value="EFG_mtEFG1_IV"/>
    <property type="match status" value="1"/>
</dbReference>
<dbReference type="CDD" id="cd03713">
    <property type="entry name" value="EFG_mtEFG_C"/>
    <property type="match status" value="1"/>
</dbReference>
<dbReference type="CDD" id="cd04088">
    <property type="entry name" value="EFG_mtEFG_II"/>
    <property type="match status" value="1"/>
</dbReference>
<dbReference type="FunFam" id="2.40.30.10:FF:000006">
    <property type="entry name" value="Elongation factor G"/>
    <property type="match status" value="1"/>
</dbReference>
<dbReference type="FunFam" id="3.30.230.10:FF:000003">
    <property type="entry name" value="Elongation factor G"/>
    <property type="match status" value="1"/>
</dbReference>
<dbReference type="FunFam" id="3.30.70.240:FF:000001">
    <property type="entry name" value="Elongation factor G"/>
    <property type="match status" value="1"/>
</dbReference>
<dbReference type="FunFam" id="3.30.70.870:FF:000001">
    <property type="entry name" value="Elongation factor G"/>
    <property type="match status" value="1"/>
</dbReference>
<dbReference type="FunFam" id="3.40.50.300:FF:000029">
    <property type="entry name" value="Elongation factor G"/>
    <property type="match status" value="1"/>
</dbReference>
<dbReference type="Gene3D" id="3.30.230.10">
    <property type="match status" value="1"/>
</dbReference>
<dbReference type="Gene3D" id="3.30.70.240">
    <property type="match status" value="1"/>
</dbReference>
<dbReference type="Gene3D" id="3.30.70.870">
    <property type="entry name" value="Elongation Factor G (Translational Gtpase), domain 3"/>
    <property type="match status" value="1"/>
</dbReference>
<dbReference type="Gene3D" id="3.40.50.300">
    <property type="entry name" value="P-loop containing nucleotide triphosphate hydrolases"/>
    <property type="match status" value="1"/>
</dbReference>
<dbReference type="Gene3D" id="2.40.30.10">
    <property type="entry name" value="Translation factors"/>
    <property type="match status" value="1"/>
</dbReference>
<dbReference type="HAMAP" id="MF_00054_B">
    <property type="entry name" value="EF_G_EF_2_B"/>
    <property type="match status" value="1"/>
</dbReference>
<dbReference type="InterPro" id="IPR041095">
    <property type="entry name" value="EFG_II"/>
</dbReference>
<dbReference type="InterPro" id="IPR009022">
    <property type="entry name" value="EFG_III"/>
</dbReference>
<dbReference type="InterPro" id="IPR035647">
    <property type="entry name" value="EFG_III/V"/>
</dbReference>
<dbReference type="InterPro" id="IPR047872">
    <property type="entry name" value="EFG_IV"/>
</dbReference>
<dbReference type="InterPro" id="IPR035649">
    <property type="entry name" value="EFG_V"/>
</dbReference>
<dbReference type="InterPro" id="IPR000640">
    <property type="entry name" value="EFG_V-like"/>
</dbReference>
<dbReference type="InterPro" id="IPR004161">
    <property type="entry name" value="EFTu-like_2"/>
</dbReference>
<dbReference type="InterPro" id="IPR031157">
    <property type="entry name" value="G_TR_CS"/>
</dbReference>
<dbReference type="InterPro" id="IPR027417">
    <property type="entry name" value="P-loop_NTPase"/>
</dbReference>
<dbReference type="InterPro" id="IPR020568">
    <property type="entry name" value="Ribosomal_Su5_D2-typ_SF"/>
</dbReference>
<dbReference type="InterPro" id="IPR014721">
    <property type="entry name" value="Ribsml_uS5_D2-typ_fold_subgr"/>
</dbReference>
<dbReference type="InterPro" id="IPR005225">
    <property type="entry name" value="Small_GTP-bd"/>
</dbReference>
<dbReference type="InterPro" id="IPR000795">
    <property type="entry name" value="T_Tr_GTP-bd_dom"/>
</dbReference>
<dbReference type="InterPro" id="IPR009000">
    <property type="entry name" value="Transl_B-barrel_sf"/>
</dbReference>
<dbReference type="InterPro" id="IPR004540">
    <property type="entry name" value="Transl_elong_EFG/EF2"/>
</dbReference>
<dbReference type="InterPro" id="IPR005517">
    <property type="entry name" value="Transl_elong_EFG/EF2_IV"/>
</dbReference>
<dbReference type="NCBIfam" id="TIGR00484">
    <property type="entry name" value="EF-G"/>
    <property type="match status" value="1"/>
</dbReference>
<dbReference type="NCBIfam" id="NF009379">
    <property type="entry name" value="PRK12740.1-3"/>
    <property type="match status" value="1"/>
</dbReference>
<dbReference type="NCBIfam" id="NF009381">
    <property type="entry name" value="PRK12740.1-5"/>
    <property type="match status" value="1"/>
</dbReference>
<dbReference type="NCBIfam" id="TIGR00231">
    <property type="entry name" value="small_GTP"/>
    <property type="match status" value="1"/>
</dbReference>
<dbReference type="PANTHER" id="PTHR43261:SF1">
    <property type="entry name" value="RIBOSOME-RELEASING FACTOR 2, MITOCHONDRIAL"/>
    <property type="match status" value="1"/>
</dbReference>
<dbReference type="PANTHER" id="PTHR43261">
    <property type="entry name" value="TRANSLATION ELONGATION FACTOR G-RELATED"/>
    <property type="match status" value="1"/>
</dbReference>
<dbReference type="Pfam" id="PF00679">
    <property type="entry name" value="EFG_C"/>
    <property type="match status" value="1"/>
</dbReference>
<dbReference type="Pfam" id="PF14492">
    <property type="entry name" value="EFG_III"/>
    <property type="match status" value="1"/>
</dbReference>
<dbReference type="Pfam" id="PF03764">
    <property type="entry name" value="EFG_IV"/>
    <property type="match status" value="1"/>
</dbReference>
<dbReference type="Pfam" id="PF00009">
    <property type="entry name" value="GTP_EFTU"/>
    <property type="match status" value="1"/>
</dbReference>
<dbReference type="Pfam" id="PF03144">
    <property type="entry name" value="GTP_EFTU_D2"/>
    <property type="match status" value="1"/>
</dbReference>
<dbReference type="PRINTS" id="PR00315">
    <property type="entry name" value="ELONGATNFCT"/>
</dbReference>
<dbReference type="SMART" id="SM00838">
    <property type="entry name" value="EFG_C"/>
    <property type="match status" value="1"/>
</dbReference>
<dbReference type="SMART" id="SM00889">
    <property type="entry name" value="EFG_IV"/>
    <property type="match status" value="1"/>
</dbReference>
<dbReference type="SUPFAM" id="SSF54980">
    <property type="entry name" value="EF-G C-terminal domain-like"/>
    <property type="match status" value="2"/>
</dbReference>
<dbReference type="SUPFAM" id="SSF52540">
    <property type="entry name" value="P-loop containing nucleoside triphosphate hydrolases"/>
    <property type="match status" value="1"/>
</dbReference>
<dbReference type="SUPFAM" id="SSF54211">
    <property type="entry name" value="Ribosomal protein S5 domain 2-like"/>
    <property type="match status" value="1"/>
</dbReference>
<dbReference type="SUPFAM" id="SSF50447">
    <property type="entry name" value="Translation proteins"/>
    <property type="match status" value="1"/>
</dbReference>
<dbReference type="PROSITE" id="PS00301">
    <property type="entry name" value="G_TR_1"/>
    <property type="match status" value="1"/>
</dbReference>
<dbReference type="PROSITE" id="PS51722">
    <property type="entry name" value="G_TR_2"/>
    <property type="match status" value="1"/>
</dbReference>
<sequence>MARTTPLERVRNIGIAAHIDAGKTTTTERILFYSGVVHKIGEVHEGNTVTDWMVQERERGITITAAAITTAWTKRDPQNPTQPMPGALEHKINIIDTPGHVDFTIEVERSMRVLDGVIAVFCSVGGVQPQSETVWRQANRYSVPRIVFVNKMDRTGANFYRVYDQIRDRLRANAVPIQLPIGAEDTLRGLIDLVRMRAYLYKNDIGTDIEETEIPADMQEQADEFRTKLVEAVAEADDVLMEKYLEGEDLTEEEIRAGLRQGTIAGTIVPMLCGSAFKNKGVQLLLDAVIDYLPAPTEVPAIQGTLPDGTEVERKADDAQPLAGLAFKIMSDPYGRLTFVRVYSGILKKGSYVLNSTKGKKERISRLIVLKADDRIEVDELRAGDLGAALGLKDTFTGDTLCDDSAPVILESLFIPEPVISVAVEPKTKQDMEKLSKALQSLSEEDPTFRVSVDPETNQTVIAGMGELHLEILVDRMLREFNVGANVGAPQVAYRETVRKPVRTEGKFIRQSGGKGQYGHVVIELEPGDPGSGFEFVSKIVGGVVPKEYIGPAEQGMKEACESGILAGYPVIDLKVTMVDGSFHEVDSSEMAFKIAGSMAIKDAVMKANPVLLEPMMKVEVEVPEDFLGSVMGDLISRRGQIEGQTATEGIAKVTAKVPLERMFGYATDIRSNTQGRGIFSMEFSHYEEVPRNVAEAIIAKNKGNA</sequence>
<proteinExistence type="inferred from homology"/>
<protein>
    <recommendedName>
        <fullName evidence="1">Elongation factor G</fullName>
        <shortName evidence="1">EF-G</shortName>
    </recommendedName>
</protein>
<name>EFG_CYAP4</name>
<feature type="chain" id="PRO_1000201453" description="Elongation factor G">
    <location>
        <begin position="1"/>
        <end position="706"/>
    </location>
</feature>
<feature type="domain" description="tr-type G">
    <location>
        <begin position="8"/>
        <end position="297"/>
    </location>
</feature>
<feature type="binding site" evidence="1">
    <location>
        <begin position="17"/>
        <end position="24"/>
    </location>
    <ligand>
        <name>GTP</name>
        <dbReference type="ChEBI" id="CHEBI:37565"/>
    </ligand>
</feature>
<feature type="binding site" evidence="1">
    <location>
        <begin position="96"/>
        <end position="100"/>
    </location>
    <ligand>
        <name>GTP</name>
        <dbReference type="ChEBI" id="CHEBI:37565"/>
    </ligand>
</feature>
<feature type="binding site" evidence="1">
    <location>
        <begin position="150"/>
        <end position="153"/>
    </location>
    <ligand>
        <name>GTP</name>
        <dbReference type="ChEBI" id="CHEBI:37565"/>
    </ligand>
</feature>
<comment type="function">
    <text evidence="1">Catalyzes the GTP-dependent ribosomal translocation step during translation elongation. During this step, the ribosome changes from the pre-translocational (PRE) to the post-translocational (POST) state as the newly formed A-site-bound peptidyl-tRNA and P-site-bound deacylated tRNA move to the P and E sites, respectively. Catalyzes the coordinated movement of the two tRNA molecules, the mRNA and conformational changes in the ribosome.</text>
</comment>
<comment type="subcellular location">
    <subcellularLocation>
        <location evidence="1">Cytoplasm</location>
    </subcellularLocation>
</comment>
<comment type="similarity">
    <text evidence="1">Belongs to the TRAFAC class translation factor GTPase superfamily. Classic translation factor GTPase family. EF-G/EF-2 subfamily.</text>
</comment>
<accession>B8HVR8</accession>
<organism>
    <name type="scientific">Cyanothece sp. (strain PCC 7425 / ATCC 29141)</name>
    <dbReference type="NCBI Taxonomy" id="395961"/>
    <lineage>
        <taxon>Bacteria</taxon>
        <taxon>Bacillati</taxon>
        <taxon>Cyanobacteriota</taxon>
        <taxon>Cyanophyceae</taxon>
        <taxon>Gomontiellales</taxon>
        <taxon>Cyanothecaceae</taxon>
        <taxon>Cyanothece</taxon>
    </lineage>
</organism>
<keyword id="KW-0963">Cytoplasm</keyword>
<keyword id="KW-0251">Elongation factor</keyword>
<keyword id="KW-0342">GTP-binding</keyword>
<keyword id="KW-0547">Nucleotide-binding</keyword>
<keyword id="KW-0648">Protein biosynthesis</keyword>
<reference key="1">
    <citation type="journal article" date="2011" name="MBio">
        <title>Novel metabolic attributes of the genus Cyanothece, comprising a group of unicellular nitrogen-fixing Cyanobacteria.</title>
        <authorList>
            <person name="Bandyopadhyay A."/>
            <person name="Elvitigala T."/>
            <person name="Welsh E."/>
            <person name="Stockel J."/>
            <person name="Liberton M."/>
            <person name="Min H."/>
            <person name="Sherman L.A."/>
            <person name="Pakrasi H.B."/>
        </authorList>
    </citation>
    <scope>NUCLEOTIDE SEQUENCE [LARGE SCALE GENOMIC DNA]</scope>
    <source>
        <strain>PCC 7425 / ATCC 29141</strain>
    </source>
</reference>
<gene>
    <name evidence="1" type="primary">fusA</name>
    <name type="ordered locus">Cyan7425_0709</name>
</gene>